<proteinExistence type="inferred from homology"/>
<comment type="subcellular location">
    <subcellularLocation>
        <location evidence="1">Cytoplasm</location>
        <location evidence="1">Nucleoid</location>
    </subcellularLocation>
</comment>
<comment type="similarity">
    <text evidence="1">Belongs to the YejK family.</text>
</comment>
<dbReference type="EMBL" id="CP000712">
    <property type="protein sequence ID" value="ABQ77173.1"/>
    <property type="molecule type" value="Genomic_DNA"/>
</dbReference>
<dbReference type="SMR" id="A5VZ63"/>
<dbReference type="KEGG" id="ppf:Pput_1012"/>
<dbReference type="eggNOG" id="COG3081">
    <property type="taxonomic scope" value="Bacteria"/>
</dbReference>
<dbReference type="HOGENOM" id="CLU_063050_0_1_6"/>
<dbReference type="GO" id="GO:0043590">
    <property type="term" value="C:bacterial nucleoid"/>
    <property type="evidence" value="ECO:0007669"/>
    <property type="project" value="TreeGrafter"/>
</dbReference>
<dbReference type="GO" id="GO:0005737">
    <property type="term" value="C:cytoplasm"/>
    <property type="evidence" value="ECO:0007669"/>
    <property type="project" value="UniProtKB-UniRule"/>
</dbReference>
<dbReference type="GO" id="GO:0003690">
    <property type="term" value="F:double-stranded DNA binding"/>
    <property type="evidence" value="ECO:0007669"/>
    <property type="project" value="TreeGrafter"/>
</dbReference>
<dbReference type="GO" id="GO:0003727">
    <property type="term" value="F:single-stranded RNA binding"/>
    <property type="evidence" value="ECO:0007669"/>
    <property type="project" value="TreeGrafter"/>
</dbReference>
<dbReference type="HAMAP" id="MF_00730">
    <property type="entry name" value="NdpA"/>
    <property type="match status" value="1"/>
</dbReference>
<dbReference type="InterPro" id="IPR007358">
    <property type="entry name" value="Nucleoid_associated_NdpA"/>
</dbReference>
<dbReference type="NCBIfam" id="NF001557">
    <property type="entry name" value="PRK00378.1"/>
    <property type="match status" value="1"/>
</dbReference>
<dbReference type="PANTHER" id="PTHR38772">
    <property type="match status" value="1"/>
</dbReference>
<dbReference type="PANTHER" id="PTHR38772:SF1">
    <property type="entry name" value="NUCLEOID-ASSOCIATED PROTEIN YEJK"/>
    <property type="match status" value="1"/>
</dbReference>
<dbReference type="Pfam" id="PF04245">
    <property type="entry name" value="NA37"/>
    <property type="match status" value="1"/>
</dbReference>
<evidence type="ECO:0000255" key="1">
    <source>
        <dbReference type="HAMAP-Rule" id="MF_00730"/>
    </source>
</evidence>
<protein>
    <recommendedName>
        <fullName evidence="1">Nucleoid-associated protein Pput_1012</fullName>
    </recommendedName>
</protein>
<name>NDPA_PSEP1</name>
<organism>
    <name type="scientific">Pseudomonas putida (strain ATCC 700007 / DSM 6899 / JCM 31910 / BCRC 17059 / LMG 24140 / F1)</name>
    <dbReference type="NCBI Taxonomy" id="351746"/>
    <lineage>
        <taxon>Bacteria</taxon>
        <taxon>Pseudomonadati</taxon>
        <taxon>Pseudomonadota</taxon>
        <taxon>Gammaproteobacteria</taxon>
        <taxon>Pseudomonadales</taxon>
        <taxon>Pseudomonadaceae</taxon>
        <taxon>Pseudomonas</taxon>
    </lineage>
</organism>
<reference key="1">
    <citation type="submission" date="2007-05" db="EMBL/GenBank/DDBJ databases">
        <title>Complete sequence of Pseudomonas putida F1.</title>
        <authorList>
            <consortium name="US DOE Joint Genome Institute"/>
            <person name="Copeland A."/>
            <person name="Lucas S."/>
            <person name="Lapidus A."/>
            <person name="Barry K."/>
            <person name="Detter J.C."/>
            <person name="Glavina del Rio T."/>
            <person name="Hammon N."/>
            <person name="Israni S."/>
            <person name="Dalin E."/>
            <person name="Tice H."/>
            <person name="Pitluck S."/>
            <person name="Chain P."/>
            <person name="Malfatti S."/>
            <person name="Shin M."/>
            <person name="Vergez L."/>
            <person name="Schmutz J."/>
            <person name="Larimer F."/>
            <person name="Land M."/>
            <person name="Hauser L."/>
            <person name="Kyrpides N."/>
            <person name="Lykidis A."/>
            <person name="Parales R."/>
            <person name="Richardson P."/>
        </authorList>
    </citation>
    <scope>NUCLEOTIDE SEQUENCE [LARGE SCALE GENOMIC DNA]</scope>
    <source>
        <strain>ATCC 700007 / DSM 6899 / JCM 31910 / BCRC 17059 / LMG 24140 / F1</strain>
    </source>
</reference>
<keyword id="KW-0963">Cytoplasm</keyword>
<feature type="chain" id="PRO_1000045936" description="Nucleoid-associated protein Pput_1012">
    <location>
        <begin position="1"/>
        <end position="335"/>
    </location>
</feature>
<gene>
    <name type="ordered locus">Pput_1012</name>
</gene>
<sequence>MPIRHCIVHLIDKKPDGSPAVLHARDSELAASDAIENLLADLNDSYNAKQGKAWGFFHGESGAYPLSGWLKQYLEGEKDFTAFSRVAVEHLQKLMEESNLSTGGHILFAHYQQGMTEYLAIALLHHSEGVAVNAELDVTPSRHLDLGQLHLAARINLSEWKNNQNSKQYISFIKGKNGKKVSDYFRDFIGCQEGVDGPGETRTLLKAFSDFVESEDLPEESAREKTQTLVEYATTQTKLGEPVTLEELSSLIDEDRPKAFYDHIRNKDYGLSPEIPADKRTLNQFRRFTGRAEGLSISFEAHLLGDKVEYDEAAGTLIIKGLPTTLVDQLKRRKD</sequence>
<accession>A5VZ63</accession>